<evidence type="ECO:0000255" key="1">
    <source>
        <dbReference type="HAMAP-Rule" id="MF_01609"/>
    </source>
</evidence>
<organism>
    <name type="scientific">Escherichia coli (strain SE11)</name>
    <dbReference type="NCBI Taxonomy" id="409438"/>
    <lineage>
        <taxon>Bacteria</taxon>
        <taxon>Pseudomonadati</taxon>
        <taxon>Pseudomonadota</taxon>
        <taxon>Gammaproteobacteria</taxon>
        <taxon>Enterobacterales</taxon>
        <taxon>Enterobacteriaceae</taxon>
        <taxon>Escherichia</taxon>
    </lineage>
</organism>
<reference key="1">
    <citation type="journal article" date="2008" name="DNA Res.">
        <title>Complete genome sequence and comparative analysis of the wild-type commensal Escherichia coli strain SE11 isolated from a healthy adult.</title>
        <authorList>
            <person name="Oshima K."/>
            <person name="Toh H."/>
            <person name="Ogura Y."/>
            <person name="Sasamoto H."/>
            <person name="Morita H."/>
            <person name="Park S.-H."/>
            <person name="Ooka T."/>
            <person name="Iyoda S."/>
            <person name="Taylor T.D."/>
            <person name="Hayashi T."/>
            <person name="Itoh K."/>
            <person name="Hattori M."/>
        </authorList>
    </citation>
    <scope>NUCLEOTIDE SEQUENCE [LARGE SCALE GENOMIC DNA]</scope>
    <source>
        <strain>SE11</strain>
    </source>
</reference>
<accession>B6I0N0</accession>
<gene>
    <name type="primary">ybdK</name>
    <name type="ordered locus">ECSE_0645</name>
</gene>
<name>GCS2_ECOSE</name>
<sequence length="372" mass="41677">MPLPDFHVSEPFTLGIELEMQVVNPPGYDLSQDSSMLIDAVKNEITAGEVKHDITESMLELATDVCRDINQAAGQFSAMQKVVLQAAADHHLEICGGGTHPFQKWQRQEVCDNERYQRTLENFGYLIQQATVFGQHVHVGCASGDDAIYLLHGLSRFVPHFIALSAASPYMQGTDTRFASSRPNIFSAFPDNGPMPWVSNWQQFEALFRCLSYTTMIDSIKDLHWDIRPSPHFGTVEVRVMDTPLTLSHAVNMAGLIQATAHWLLTERPFKHQEKDYLLYKFNRFQACRYGLEGVITDPHTGDRRPLTEDTLRLLEKIAPSAHKMGASSAIEALHRQVVSGLNEAQLMRDFVADGGSLIGLVKKHCEIWAGD</sequence>
<proteinExistence type="inferred from homology"/>
<feature type="chain" id="PRO_1000148218" description="Putative glutamate--cysteine ligase 2">
    <location>
        <begin position="1"/>
        <end position="372"/>
    </location>
</feature>
<keyword id="KW-0067">ATP-binding</keyword>
<keyword id="KW-0436">Ligase</keyword>
<keyword id="KW-0547">Nucleotide-binding</keyword>
<dbReference type="EC" id="6.3.2.2" evidence="1"/>
<dbReference type="EMBL" id="AP009240">
    <property type="protein sequence ID" value="BAG76169.1"/>
    <property type="molecule type" value="Genomic_DNA"/>
</dbReference>
<dbReference type="RefSeq" id="WP_001130618.1">
    <property type="nucleotide sequence ID" value="NC_011415.1"/>
</dbReference>
<dbReference type="SMR" id="B6I0N0"/>
<dbReference type="KEGG" id="ecy:ECSE_0645"/>
<dbReference type="HOGENOM" id="CLU_044848_1_1_6"/>
<dbReference type="Proteomes" id="UP000008199">
    <property type="component" value="Chromosome"/>
</dbReference>
<dbReference type="GO" id="GO:0005524">
    <property type="term" value="F:ATP binding"/>
    <property type="evidence" value="ECO:0007669"/>
    <property type="project" value="UniProtKB-KW"/>
</dbReference>
<dbReference type="GO" id="GO:0004357">
    <property type="term" value="F:glutamate-cysteine ligase activity"/>
    <property type="evidence" value="ECO:0007669"/>
    <property type="project" value="UniProtKB-EC"/>
</dbReference>
<dbReference type="GO" id="GO:0042398">
    <property type="term" value="P:modified amino acid biosynthetic process"/>
    <property type="evidence" value="ECO:0007669"/>
    <property type="project" value="InterPro"/>
</dbReference>
<dbReference type="FunFam" id="3.30.590.20:FF:000002">
    <property type="entry name" value="Putative glutamate--cysteine ligase 2"/>
    <property type="match status" value="1"/>
</dbReference>
<dbReference type="Gene3D" id="3.30.590.20">
    <property type="match status" value="1"/>
</dbReference>
<dbReference type="HAMAP" id="MF_01609">
    <property type="entry name" value="Glu_cys_ligase_2"/>
    <property type="match status" value="1"/>
</dbReference>
<dbReference type="InterPro" id="IPR050141">
    <property type="entry name" value="GCL_type2/YbdK_subfam"/>
</dbReference>
<dbReference type="InterPro" id="IPR006336">
    <property type="entry name" value="GCS2"/>
</dbReference>
<dbReference type="InterPro" id="IPR014746">
    <property type="entry name" value="Gln_synth/guanido_kin_cat_dom"/>
</dbReference>
<dbReference type="InterPro" id="IPR011793">
    <property type="entry name" value="YbdK"/>
</dbReference>
<dbReference type="NCBIfam" id="TIGR02050">
    <property type="entry name" value="gshA_cyan_rel"/>
    <property type="match status" value="1"/>
</dbReference>
<dbReference type="NCBIfam" id="NF010040">
    <property type="entry name" value="PRK13516.1"/>
    <property type="match status" value="1"/>
</dbReference>
<dbReference type="PANTHER" id="PTHR36510">
    <property type="entry name" value="GLUTAMATE--CYSTEINE LIGASE 2-RELATED"/>
    <property type="match status" value="1"/>
</dbReference>
<dbReference type="PANTHER" id="PTHR36510:SF1">
    <property type="entry name" value="GLUTAMATE--CYSTEINE LIGASE 2-RELATED"/>
    <property type="match status" value="1"/>
</dbReference>
<dbReference type="Pfam" id="PF04107">
    <property type="entry name" value="GCS2"/>
    <property type="match status" value="1"/>
</dbReference>
<dbReference type="SUPFAM" id="SSF55931">
    <property type="entry name" value="Glutamine synthetase/guanido kinase"/>
    <property type="match status" value="1"/>
</dbReference>
<comment type="function">
    <text evidence="1">ATP-dependent carboxylate-amine ligase which exhibits weak glutamate--cysteine ligase activity.</text>
</comment>
<comment type="catalytic activity">
    <reaction evidence="1">
        <text>L-cysteine + L-glutamate + ATP = gamma-L-glutamyl-L-cysteine + ADP + phosphate + H(+)</text>
        <dbReference type="Rhea" id="RHEA:13285"/>
        <dbReference type="ChEBI" id="CHEBI:15378"/>
        <dbReference type="ChEBI" id="CHEBI:29985"/>
        <dbReference type="ChEBI" id="CHEBI:30616"/>
        <dbReference type="ChEBI" id="CHEBI:35235"/>
        <dbReference type="ChEBI" id="CHEBI:43474"/>
        <dbReference type="ChEBI" id="CHEBI:58173"/>
        <dbReference type="ChEBI" id="CHEBI:456216"/>
        <dbReference type="EC" id="6.3.2.2"/>
    </reaction>
</comment>
<comment type="subunit">
    <text evidence="1">Homodimer.</text>
</comment>
<comment type="similarity">
    <text evidence="1">Belongs to the glutamate--cysteine ligase type 2 family. YbdK subfamily.</text>
</comment>
<protein>
    <recommendedName>
        <fullName evidence="1">Putative glutamate--cysteine ligase 2</fullName>
        <ecNumber evidence="1">6.3.2.2</ecNumber>
    </recommendedName>
    <alternativeName>
        <fullName evidence="1">Gamma-glutamylcysteine synthetase 2</fullName>
        <shortName evidence="1">GCS 2</shortName>
        <shortName evidence="1">Gamma-GCS 2</shortName>
    </alternativeName>
</protein>